<keyword id="KW-0002">3D-structure</keyword>
<keyword id="KW-0963">Cytoplasm</keyword>
<keyword id="KW-1185">Reference proteome</keyword>
<keyword id="KW-0694">RNA-binding</keyword>
<keyword id="KW-0699">rRNA-binding</keyword>
<comment type="function">
    <text evidence="1 2 3 4 5 6 7">Required for rescue of stalled ribosomes mediated by trans-translation. Binds to tmRNA (also known as SsrA and 10Sa), required for stable association of tmRNA with ribosomes, probably by bridging tmRNA to 50S subunit. tmRNA and SmpB together mimic tRNA shape, replacing the anticodon stem-loop with SmpB (PubMed:17488812, PubMed:22422985). tmRNA is encoded by the ssrA gene; the 2 termini fold to resemble tRNA(Ala) and it encodes a 'tag peptide', a short internal open reading frame. During trans-translation Ala-aminoacylated tmRNA acts like a tRNA, entering the A-site of stalled ribosomes, displacing the stalled mRNA. The ribosome then switches to translate the ORF on the tmRNA; the nascent peptide is terminated with the 'tag peptide' encoded by the tmRNA and targeted for degradation. The ribosome is freed to recommence translation, which seems to be the essential function of trans-translation.</text>
</comment>
<comment type="subunit">
    <text evidence="2 3 4 5 6 7">Binds tmRNA (PubMed:12677067, PubMed:17488812, PubMed:20940705, PubMed:20953161, PubMed:22422985, PubMed:22622583). Binds to both the 50S and 30S ribosomal subunits via rRNA contacts, bridges tmRNA binding to stalled ribosomes.</text>
</comment>
<comment type="subcellular location">
    <subcellularLocation>
        <location evidence="1">Cytoplasm</location>
    </subcellularLocation>
    <text evidence="1 4 5 6 7">The tmRNA-SmpB complex associates with stalled 70S ribosomes (PubMed:20940705, PubMed:20953161, PubMed:22422985, PubMed:22622583).</text>
</comment>
<comment type="miscellaneous">
    <text evidence="8 9">Athough the Valle et al., electron microscopy paper indicates this protein came from T.thermophilus, its sequence maps to A.aeolicus (PubMed:12677067). The Fu et al., paper maps the coordinates of T.thermophilus to E.coli (PubMed:20940705).</text>
</comment>
<comment type="similarity">
    <text evidence="1">Belongs to the SmpB family.</text>
</comment>
<evidence type="ECO:0000255" key="1">
    <source>
        <dbReference type="HAMAP-Rule" id="MF_00023"/>
    </source>
</evidence>
<evidence type="ECO:0000269" key="2">
    <source>
    </source>
</evidence>
<evidence type="ECO:0000269" key="3">
    <source>
    </source>
</evidence>
<evidence type="ECO:0000269" key="4">
    <source>
    </source>
</evidence>
<evidence type="ECO:0000269" key="5">
    <source>
    </source>
</evidence>
<evidence type="ECO:0000269" key="6">
    <source>
    </source>
</evidence>
<evidence type="ECO:0000269" key="7">
    <source>
    </source>
</evidence>
<evidence type="ECO:0000305" key="8">
    <source>
    </source>
</evidence>
<evidence type="ECO:0000305" key="9">
    <source>
    </source>
</evidence>
<evidence type="ECO:0007829" key="10">
    <source>
        <dbReference type="PDB" id="1J1H"/>
    </source>
</evidence>
<evidence type="ECO:0007829" key="11">
    <source>
        <dbReference type="PDB" id="1WJX"/>
    </source>
</evidence>
<reference key="1">
    <citation type="submission" date="2001-08" db="EMBL/GenBank/DDBJ databases">
        <title>Interaction of tmRNA with a tmRNA-binding protein, SmpB, from Thermus thermophilus.</title>
        <authorList>
            <person name="Nameki N."/>
            <person name="Kimoto M."/>
            <person name="Terada T."/>
            <person name="Shirouzu M."/>
            <person name="Suetsugu-Hanawa K."/>
            <person name="Takaku H."/>
            <person name="Himeno H."/>
            <person name="Muto A."/>
            <person name="Inoue Y."/>
            <person name="Shibata T."/>
            <person name="Kuramitsu S."/>
            <person name="Yokoyama S."/>
            <person name="Kawai G."/>
        </authorList>
    </citation>
    <scope>NUCLEOTIDE SEQUENCE [GENOMIC DNA]</scope>
</reference>
<reference key="2">
    <citation type="submission" date="2004-11" db="EMBL/GenBank/DDBJ databases">
        <title>Complete genome sequence of Thermus thermophilus HB8.</title>
        <authorList>
            <person name="Masui R."/>
            <person name="Kurokawa K."/>
            <person name="Nakagawa N."/>
            <person name="Tokunaga F."/>
            <person name="Koyama Y."/>
            <person name="Shibata T."/>
            <person name="Oshima T."/>
            <person name="Yokoyama S."/>
            <person name="Yasunaga T."/>
            <person name="Kuramitsu S."/>
        </authorList>
    </citation>
    <scope>NUCLEOTIDE SEQUENCE [LARGE SCALE GENOMIC DNA]</scope>
    <source>
        <strain>ATCC 27634 / DSM 579 / HB8</strain>
    </source>
</reference>
<reference key="3">
    <citation type="journal article" date="2003" name="FEBS Lett.">
        <title>Solution structure of a tmRNA-binding protein, SmpB, from Thermus thermophilus.</title>
        <authorList>
            <person name="Someya T."/>
            <person name="Nameki N."/>
            <person name="Hosoi H."/>
            <person name="Suzuki S."/>
            <person name="Hatanaka H."/>
            <person name="Fujii M."/>
            <person name="Terada T."/>
            <person name="Shirouzu M."/>
            <person name="Inoue Y."/>
            <person name="Shibata T."/>
            <person name="Kuramitsu S."/>
            <person name="Yokoyama S."/>
            <person name="Kawai G."/>
        </authorList>
    </citation>
    <scope>STRUCTURE BY NMR</scope>
    <source>
        <strain>ATCC 27634 / DSM 579 / HB8</strain>
    </source>
</reference>
<reference key="4">
    <citation type="journal article" date="2003" name="Science">
        <title>Visualizing tmRNA entry into a stalled ribosome.</title>
        <authorList>
            <person name="Valle M."/>
            <person name="Gillet R."/>
            <person name="Kaur S."/>
            <person name="Henne A."/>
            <person name="Ramakrishnan V."/>
            <person name="Frank J."/>
        </authorList>
    </citation>
    <scope>STRUCTURE BY ELECTRON MICROSCOPY (13.00 ANGSTROMS)</scope>
    <scope>FUNCTION</scope>
    <scope>SUBUNIT</scope>
    <scope>RRNA-BINDING</scope>
    <scope>TMRNA-BINDING</scope>
</reference>
<reference key="5">
    <citation type="journal article" date="2007" name="Proc. Natl. Acad. Sci. U.S.A.">
        <title>Structural basis for functional mimicry of long-variable-arm tRNA by transfer-messenger RNA.</title>
        <authorList>
            <person name="Bessho Y."/>
            <person name="Shibata R."/>
            <person name="Sekine S."/>
            <person name="Murayama K."/>
            <person name="Higashijima K."/>
            <person name="Hori-Takemoto C."/>
            <person name="Shirouzu M."/>
            <person name="Kuramitsu S."/>
            <person name="Yokoyama S."/>
        </authorList>
    </citation>
    <scope>X-RAY CRYSTALLOGRAPHY (1.70 ANGSTROMS) OF 2-123 IN COMPLEX WITH TMRNA</scope>
    <scope>FUNCTION</scope>
    <scope>SUBUNIT</scope>
    <scope>TMRNA-BINDING</scope>
</reference>
<reference key="6">
    <citation type="journal article" date="2010" name="EMBO J.">
        <title>tmRNA-SmpB: a journey to the centre of the bacterial ribosome.</title>
        <authorList>
            <person name="Weis F."/>
            <person name="Bron P."/>
            <person name="Giudice E."/>
            <person name="Rolland J.P."/>
            <person name="Thomas D."/>
            <person name="Felden B."/>
            <person name="Gillet R."/>
        </authorList>
    </citation>
    <scope>STRUCTURE BY ELECTRON MICROSCOPY (13.00 ANGSTROMS) OF 2-144 IN COMPLEX WITH TMRNA AND 70S RIBOSOMES</scope>
    <scope>FUNCTION</scope>
    <scope>SUBUNIT</scope>
    <scope>SUBCELLULAR LOCATION</scope>
    <scope>TMRNA-BINDING</scope>
    <scope>RRNA-BINDING</scope>
    <source>
        <strain>ATCC 27634 / DSM 579 / HB8</strain>
    </source>
</reference>
<reference key="7">
    <citation type="journal article" date="2010" name="EMBO J.">
        <title>Visualizing the transfer-messenger RNA as the ribosome resumes translation.</title>
        <authorList>
            <person name="Fu J."/>
            <person name="Hashem Y."/>
            <person name="Wower I."/>
            <person name="Lei J."/>
            <person name="Liao H.Y."/>
            <person name="Zwieb C."/>
            <person name="Wower J."/>
            <person name="Frank J."/>
        </authorList>
    </citation>
    <scope>STRUCTURE BY ELECTRON MICROSCOPY (13.60 ANGSTROMS) OF 2-123 IN COMPLEX WITH TMRNA AND 70S RIBOSOMES</scope>
    <scope>FUNCTION</scope>
    <scope>SUBUNIT</scope>
    <scope>SUBCELLULAR LOCATION</scope>
</reference>
<reference key="8">
    <citation type="journal article" date="2012" name="Science">
        <title>Decoding in the absence of a codon by tmRNA and SmpB in the ribosome.</title>
        <authorList>
            <person name="Neubauer C."/>
            <person name="Gillet R."/>
            <person name="Kelley A.C."/>
            <person name="Ramakrishnan V."/>
        </authorList>
    </citation>
    <scope>X-RAY CRYSTALLOGRAPHY (3.10 ANGSTROMS) IN COMPLEX WITH TMRNA AND 70S RIBOSOMES</scope>
    <scope>FUNCTION</scope>
    <scope>SUBUNIT</scope>
    <scope>SUBCELLULAR LOCATION</scope>
    <scope>RRNA-BINDING</scope>
    <scope>TNRNA-BINDING</scope>
    <source>
        <strain>ATCC 27634 / DSM 579 / HB8</strain>
    </source>
</reference>
<reference key="9">
    <citation type="journal article" date="2012" name="Nature">
        <title>The complex of tmRNA-SmpB and EF-G on translocating ribosomes.</title>
        <authorList>
            <person name="Ramrath D.J."/>
            <person name="Yamamoto H."/>
            <person name="Rother K."/>
            <person name="Wittek D."/>
            <person name="Pech M."/>
            <person name="Mielke T."/>
            <person name="Loerke J."/>
            <person name="Scheerer P."/>
            <person name="Ivanov P."/>
            <person name="Teraoka Y."/>
            <person name="Shpanchenko O."/>
            <person name="Nierhaus K.H."/>
            <person name="Spahn C.M."/>
        </authorList>
    </citation>
    <scope>STRUCTURE BY ELECTRON MICROSCOPY (8.30 ANGSTROMS) OF 1-123 IN COMPLEX WITH TMRNA AND 70S RIBOSOMES</scope>
    <scope>FUNCTION</scope>
    <scope>SUBUNIT</scope>
    <scope>SUBCELLULAR LOCATION</scope>
</reference>
<name>SSRP_THET8</name>
<gene>
    <name evidence="1" type="primary">smpB</name>
    <name type="ordered locus">TTHA0902</name>
</gene>
<proteinExistence type="evidence at protein level"/>
<dbReference type="EMBL" id="AB070601">
    <property type="protein sequence ID" value="BAB86918.1"/>
    <property type="molecule type" value="Genomic_DNA"/>
</dbReference>
<dbReference type="EMBL" id="AP008226">
    <property type="protein sequence ID" value="BAD70725.1"/>
    <property type="molecule type" value="Genomic_DNA"/>
</dbReference>
<dbReference type="RefSeq" id="WP_011172991.1">
    <property type="nucleotide sequence ID" value="NC_006461.1"/>
</dbReference>
<dbReference type="RefSeq" id="YP_144168.1">
    <property type="nucleotide sequence ID" value="NC_006461.1"/>
</dbReference>
<dbReference type="PDB" id="1J1H">
    <property type="method" value="NMR"/>
    <property type="chains" value="A=1-144"/>
</dbReference>
<dbReference type="PDB" id="1WJX">
    <property type="method" value="X-ray"/>
    <property type="resolution" value="1.70 A"/>
    <property type="chains" value="A=2-123"/>
</dbReference>
<dbReference type="PDB" id="2CZJ">
    <property type="method" value="X-ray"/>
    <property type="resolution" value="3.01 A"/>
    <property type="chains" value="A/C/E/G=1-123"/>
</dbReference>
<dbReference type="PDB" id="3IYQ">
    <property type="method" value="EM"/>
    <property type="chains" value="B=2-144"/>
</dbReference>
<dbReference type="PDB" id="3IYR">
    <property type="method" value="EM"/>
    <property type="chains" value="B=2-144"/>
</dbReference>
<dbReference type="PDB" id="3IZ4">
    <property type="method" value="EM"/>
    <property type="chains" value="B=2-123"/>
</dbReference>
<dbReference type="PDB" id="4V6T">
    <property type="method" value="EM"/>
    <property type="resolution" value="8.30 A"/>
    <property type="chains" value="W=1-123"/>
</dbReference>
<dbReference type="PDB" id="4V8Q">
    <property type="method" value="X-ray"/>
    <property type="resolution" value="3.10 A"/>
    <property type="chains" value="B2=1-144"/>
</dbReference>
<dbReference type="PDB" id="6Q95">
    <property type="method" value="EM"/>
    <property type="resolution" value="3.70 A"/>
    <property type="chains" value="5=1-144"/>
</dbReference>
<dbReference type="PDBsum" id="1J1H"/>
<dbReference type="PDBsum" id="1WJX"/>
<dbReference type="PDBsum" id="2CZJ"/>
<dbReference type="PDBsum" id="3IYQ"/>
<dbReference type="PDBsum" id="3IYR"/>
<dbReference type="PDBsum" id="3IZ4"/>
<dbReference type="PDBsum" id="4V6T"/>
<dbReference type="PDBsum" id="4V8Q"/>
<dbReference type="PDBsum" id="6Q95"/>
<dbReference type="EMDB" id="EMD-4475"/>
<dbReference type="SMR" id="Q8RR57"/>
<dbReference type="EnsemblBacteria" id="BAD70725">
    <property type="protein sequence ID" value="BAD70725"/>
    <property type="gene ID" value="BAD70725"/>
</dbReference>
<dbReference type="GeneID" id="3169917"/>
<dbReference type="KEGG" id="ttj:TTHA0902"/>
<dbReference type="PATRIC" id="fig|300852.9.peg.894"/>
<dbReference type="eggNOG" id="COG0691">
    <property type="taxonomic scope" value="Bacteria"/>
</dbReference>
<dbReference type="HOGENOM" id="CLU_108953_0_0_0"/>
<dbReference type="PhylomeDB" id="Q8RR57"/>
<dbReference type="EvolutionaryTrace" id="Q8RR57"/>
<dbReference type="Proteomes" id="UP000000532">
    <property type="component" value="Chromosome"/>
</dbReference>
<dbReference type="GO" id="GO:0005829">
    <property type="term" value="C:cytosol"/>
    <property type="evidence" value="ECO:0007669"/>
    <property type="project" value="TreeGrafter"/>
</dbReference>
<dbReference type="GO" id="GO:0019843">
    <property type="term" value="F:rRNA binding"/>
    <property type="evidence" value="ECO:0007669"/>
    <property type="project" value="UniProtKB-KW"/>
</dbReference>
<dbReference type="GO" id="GO:0070929">
    <property type="term" value="P:trans-translation"/>
    <property type="evidence" value="ECO:0007669"/>
    <property type="project" value="UniProtKB-UniRule"/>
</dbReference>
<dbReference type="CDD" id="cd09294">
    <property type="entry name" value="SmpB"/>
    <property type="match status" value="1"/>
</dbReference>
<dbReference type="Gene3D" id="2.40.280.10">
    <property type="match status" value="1"/>
</dbReference>
<dbReference type="HAMAP" id="MF_00023">
    <property type="entry name" value="SmpB"/>
    <property type="match status" value="1"/>
</dbReference>
<dbReference type="InterPro" id="IPR023620">
    <property type="entry name" value="SmpB"/>
</dbReference>
<dbReference type="InterPro" id="IPR000037">
    <property type="entry name" value="SsrA-bd_prot"/>
</dbReference>
<dbReference type="InterPro" id="IPR020081">
    <property type="entry name" value="SsrA-bd_prot_CS"/>
</dbReference>
<dbReference type="NCBIfam" id="NF003843">
    <property type="entry name" value="PRK05422.1"/>
    <property type="match status" value="1"/>
</dbReference>
<dbReference type="NCBIfam" id="TIGR00086">
    <property type="entry name" value="smpB"/>
    <property type="match status" value="1"/>
</dbReference>
<dbReference type="PANTHER" id="PTHR30308:SF2">
    <property type="entry name" value="SSRA-BINDING PROTEIN"/>
    <property type="match status" value="1"/>
</dbReference>
<dbReference type="PANTHER" id="PTHR30308">
    <property type="entry name" value="TMRNA-BINDING COMPONENT OF TRANS-TRANSLATION TAGGING COMPLEX"/>
    <property type="match status" value="1"/>
</dbReference>
<dbReference type="Pfam" id="PF01668">
    <property type="entry name" value="SmpB"/>
    <property type="match status" value="1"/>
</dbReference>
<dbReference type="SUPFAM" id="SSF74982">
    <property type="entry name" value="Small protein B (SmpB)"/>
    <property type="match status" value="1"/>
</dbReference>
<dbReference type="PROSITE" id="PS01317">
    <property type="entry name" value="SSRP"/>
    <property type="match status" value="1"/>
</dbReference>
<protein>
    <recommendedName>
        <fullName evidence="1">SsrA-binding protein</fullName>
    </recommendedName>
    <alternativeName>
        <fullName evidence="1">Small protein B</fullName>
    </alternativeName>
</protein>
<organism>
    <name type="scientific">Thermus thermophilus (strain ATCC 27634 / DSM 579 / HB8)</name>
    <dbReference type="NCBI Taxonomy" id="300852"/>
    <lineage>
        <taxon>Bacteria</taxon>
        <taxon>Thermotogati</taxon>
        <taxon>Deinococcota</taxon>
        <taxon>Deinococci</taxon>
        <taxon>Thermales</taxon>
        <taxon>Thermaceae</taxon>
        <taxon>Thermus</taxon>
    </lineage>
</organism>
<feature type="chain" id="PRO_0000103056" description="SsrA-binding protein">
    <location>
        <begin position="1"/>
        <end position="144"/>
    </location>
</feature>
<feature type="helix" evidence="11">
    <location>
        <begin position="8"/>
        <end position="13"/>
    </location>
</feature>
<feature type="strand" evidence="11">
    <location>
        <begin position="14"/>
        <end position="24"/>
    </location>
</feature>
<feature type="helix" evidence="11">
    <location>
        <begin position="30"/>
        <end position="35"/>
    </location>
</feature>
<feature type="strand" evidence="11">
    <location>
        <begin position="45"/>
        <end position="49"/>
    </location>
</feature>
<feature type="strand" evidence="11">
    <location>
        <begin position="52"/>
        <end position="57"/>
    </location>
</feature>
<feature type="strand" evidence="10">
    <location>
        <begin position="60"/>
        <end position="63"/>
    </location>
</feature>
<feature type="strand" evidence="11">
    <location>
        <begin position="77"/>
        <end position="80"/>
    </location>
</feature>
<feature type="helix" evidence="11">
    <location>
        <begin position="83"/>
        <end position="89"/>
    </location>
</feature>
<feature type="turn" evidence="11">
    <location>
        <begin position="90"/>
        <end position="92"/>
    </location>
</feature>
<feature type="turn" evidence="10">
    <location>
        <begin position="94"/>
        <end position="97"/>
    </location>
</feature>
<feature type="strand" evidence="11">
    <location>
        <begin position="98"/>
        <end position="107"/>
    </location>
</feature>
<feature type="turn" evidence="10">
    <location>
        <begin position="109"/>
        <end position="111"/>
    </location>
</feature>
<feature type="strand" evidence="11">
    <location>
        <begin position="113"/>
        <end position="122"/>
    </location>
</feature>
<sequence>MAPVLENRRARHDYEILETYEAGIALKGTEVKSLRAGKVDFTGSFARFEDGELYLENLYIAPYEKGSYANVDPRRKRKLLLHKHELRRLLGKVEQKGLTLVPLKIYFNERGYAKVLLGLARGKKAYEKRREDKKEAVRRALEEL</sequence>
<accession>Q8RR57</accession>
<accession>Q5SMG1</accession>